<comment type="function">
    <text evidence="1">The glycine cleavage system catalyzes the degradation of glycine. The H protein shuttles the methylamine group of glycine from the P protein to the T protein.</text>
</comment>
<comment type="cofactor">
    <cofactor evidence="1">
        <name>(R)-lipoate</name>
        <dbReference type="ChEBI" id="CHEBI:83088"/>
    </cofactor>
    <text evidence="1">Binds 1 lipoyl cofactor covalently.</text>
</comment>
<comment type="subunit">
    <text evidence="1">The glycine cleavage system is composed of four proteins: P, T, L and H.</text>
</comment>
<comment type="similarity">
    <text evidence="1">Belongs to the GcvH family.</text>
</comment>
<evidence type="ECO:0000255" key="1">
    <source>
        <dbReference type="HAMAP-Rule" id="MF_00272"/>
    </source>
</evidence>
<evidence type="ECO:0000255" key="2">
    <source>
        <dbReference type="PROSITE-ProRule" id="PRU01066"/>
    </source>
</evidence>
<accession>A2C5D5</accession>
<feature type="chain" id="PRO_0000302416" description="Glycine cleavage system H protein">
    <location>
        <begin position="1"/>
        <end position="128"/>
    </location>
</feature>
<feature type="domain" description="Lipoyl-binding" evidence="2">
    <location>
        <begin position="24"/>
        <end position="106"/>
    </location>
</feature>
<feature type="modified residue" description="N6-lipoyllysine" evidence="1">
    <location>
        <position position="65"/>
    </location>
</feature>
<gene>
    <name evidence="1" type="primary">gcvH</name>
    <name type="ordered locus">NATL1_21391</name>
</gene>
<sequence>MAFSFPDHFRFADSHEYAFADDALVRIGISEFAVDQLGDIVFVDLPEEGTAIAKGESFGSVESVKAVEDMYAPVSGEIVHRNNSVLASPEELQNDPHGEGWLLIIRPDNPAQLTELMDSETYSKKISA</sequence>
<protein>
    <recommendedName>
        <fullName evidence="1">Glycine cleavage system H protein</fullName>
    </recommendedName>
</protein>
<organism>
    <name type="scientific">Prochlorococcus marinus (strain NATL1A)</name>
    <dbReference type="NCBI Taxonomy" id="167555"/>
    <lineage>
        <taxon>Bacteria</taxon>
        <taxon>Bacillati</taxon>
        <taxon>Cyanobacteriota</taxon>
        <taxon>Cyanophyceae</taxon>
        <taxon>Synechococcales</taxon>
        <taxon>Prochlorococcaceae</taxon>
        <taxon>Prochlorococcus</taxon>
    </lineage>
</organism>
<proteinExistence type="inferred from homology"/>
<reference key="1">
    <citation type="journal article" date="2007" name="PLoS Genet.">
        <title>Patterns and implications of gene gain and loss in the evolution of Prochlorococcus.</title>
        <authorList>
            <person name="Kettler G.C."/>
            <person name="Martiny A.C."/>
            <person name="Huang K."/>
            <person name="Zucker J."/>
            <person name="Coleman M.L."/>
            <person name="Rodrigue S."/>
            <person name="Chen F."/>
            <person name="Lapidus A."/>
            <person name="Ferriera S."/>
            <person name="Johnson J."/>
            <person name="Steglich C."/>
            <person name="Church G.M."/>
            <person name="Richardson P."/>
            <person name="Chisholm S.W."/>
        </authorList>
    </citation>
    <scope>NUCLEOTIDE SEQUENCE [LARGE SCALE GENOMIC DNA]</scope>
    <source>
        <strain>NATL1A</strain>
    </source>
</reference>
<keyword id="KW-0450">Lipoyl</keyword>
<dbReference type="EMBL" id="CP000553">
    <property type="protein sequence ID" value="ABM76695.1"/>
    <property type="molecule type" value="Genomic_DNA"/>
</dbReference>
<dbReference type="RefSeq" id="WP_011824633.1">
    <property type="nucleotide sequence ID" value="NC_008819.1"/>
</dbReference>
<dbReference type="SMR" id="A2C5D5"/>
<dbReference type="KEGG" id="pme:NATL1_21391"/>
<dbReference type="eggNOG" id="COG0509">
    <property type="taxonomic scope" value="Bacteria"/>
</dbReference>
<dbReference type="HOGENOM" id="CLU_097408_2_0_3"/>
<dbReference type="Proteomes" id="UP000002592">
    <property type="component" value="Chromosome"/>
</dbReference>
<dbReference type="GO" id="GO:0005829">
    <property type="term" value="C:cytosol"/>
    <property type="evidence" value="ECO:0007669"/>
    <property type="project" value="TreeGrafter"/>
</dbReference>
<dbReference type="GO" id="GO:0005960">
    <property type="term" value="C:glycine cleavage complex"/>
    <property type="evidence" value="ECO:0007669"/>
    <property type="project" value="InterPro"/>
</dbReference>
<dbReference type="GO" id="GO:0019464">
    <property type="term" value="P:glycine decarboxylation via glycine cleavage system"/>
    <property type="evidence" value="ECO:0007669"/>
    <property type="project" value="UniProtKB-UniRule"/>
</dbReference>
<dbReference type="CDD" id="cd06848">
    <property type="entry name" value="GCS_H"/>
    <property type="match status" value="1"/>
</dbReference>
<dbReference type="Gene3D" id="2.40.50.100">
    <property type="match status" value="1"/>
</dbReference>
<dbReference type="HAMAP" id="MF_00272">
    <property type="entry name" value="GcvH"/>
    <property type="match status" value="1"/>
</dbReference>
<dbReference type="InterPro" id="IPR003016">
    <property type="entry name" value="2-oxoA_DH_lipoyl-BS"/>
</dbReference>
<dbReference type="InterPro" id="IPR000089">
    <property type="entry name" value="Biotin_lipoyl"/>
</dbReference>
<dbReference type="InterPro" id="IPR002930">
    <property type="entry name" value="GCV_H"/>
</dbReference>
<dbReference type="InterPro" id="IPR033753">
    <property type="entry name" value="GCV_H/Fam206"/>
</dbReference>
<dbReference type="InterPro" id="IPR017453">
    <property type="entry name" value="GCV_H_sub"/>
</dbReference>
<dbReference type="InterPro" id="IPR011053">
    <property type="entry name" value="Single_hybrid_motif"/>
</dbReference>
<dbReference type="NCBIfam" id="TIGR00527">
    <property type="entry name" value="gcvH"/>
    <property type="match status" value="1"/>
</dbReference>
<dbReference type="NCBIfam" id="NF002270">
    <property type="entry name" value="PRK01202.1"/>
    <property type="match status" value="1"/>
</dbReference>
<dbReference type="PANTHER" id="PTHR11715">
    <property type="entry name" value="GLYCINE CLEAVAGE SYSTEM H PROTEIN"/>
    <property type="match status" value="1"/>
</dbReference>
<dbReference type="PANTHER" id="PTHR11715:SF3">
    <property type="entry name" value="GLYCINE CLEAVAGE SYSTEM H PROTEIN-RELATED"/>
    <property type="match status" value="1"/>
</dbReference>
<dbReference type="Pfam" id="PF01597">
    <property type="entry name" value="GCV_H"/>
    <property type="match status" value="1"/>
</dbReference>
<dbReference type="SUPFAM" id="SSF51230">
    <property type="entry name" value="Single hybrid motif"/>
    <property type="match status" value="1"/>
</dbReference>
<dbReference type="PROSITE" id="PS50968">
    <property type="entry name" value="BIOTINYL_LIPOYL"/>
    <property type="match status" value="1"/>
</dbReference>
<dbReference type="PROSITE" id="PS00189">
    <property type="entry name" value="LIPOYL"/>
    <property type="match status" value="1"/>
</dbReference>
<name>GCSH_PROM1</name>